<name>SYD_BACLD</name>
<comment type="function">
    <text evidence="1">Catalyzes the attachment of L-aspartate to tRNA(Asp) in a two-step reaction: L-aspartate is first activated by ATP to form Asp-AMP and then transferred to the acceptor end of tRNA(Asp).</text>
</comment>
<comment type="catalytic activity">
    <reaction evidence="1">
        <text>tRNA(Asp) + L-aspartate + ATP = L-aspartyl-tRNA(Asp) + AMP + diphosphate</text>
        <dbReference type="Rhea" id="RHEA:19649"/>
        <dbReference type="Rhea" id="RHEA-COMP:9660"/>
        <dbReference type="Rhea" id="RHEA-COMP:9678"/>
        <dbReference type="ChEBI" id="CHEBI:29991"/>
        <dbReference type="ChEBI" id="CHEBI:30616"/>
        <dbReference type="ChEBI" id="CHEBI:33019"/>
        <dbReference type="ChEBI" id="CHEBI:78442"/>
        <dbReference type="ChEBI" id="CHEBI:78516"/>
        <dbReference type="ChEBI" id="CHEBI:456215"/>
        <dbReference type="EC" id="6.1.1.12"/>
    </reaction>
</comment>
<comment type="subunit">
    <text evidence="1">Homodimer.</text>
</comment>
<comment type="subcellular location">
    <subcellularLocation>
        <location evidence="1">Cytoplasm</location>
    </subcellularLocation>
</comment>
<comment type="similarity">
    <text evidence="1">Belongs to the class-II aminoacyl-tRNA synthetase family. Type 1 subfamily.</text>
</comment>
<evidence type="ECO:0000255" key="1">
    <source>
        <dbReference type="HAMAP-Rule" id="MF_00044"/>
    </source>
</evidence>
<sequence length="592" mass="66378">MFGRTYYCGEITEKAIGETVVLKGWVQKRRDLGGLIFIDLRDRTGIVQVVFNPDVSKDALETAESIRSEYVLDITGKVVAREEATVNPNLKTGRIEIQAESVDVLSAAKTPPFAISDQAAEVSEDIRLKHRYLDLRRPEMFNSLKMRHNVTKAVRRFLDDNGFLDIETPVLTKSTPEGARDYLVPSRVHEGEFYALPQSPQIFKQLLMVSGFDRYYQIARCFRDEDLRADRQPEFTQIDIEMSFMSQEDIMKLSEEMMAHVMRETHGIEISLPLPRMSYEDAMNRYGSDKPDTRFGMLLTDVSEAVKDSDFKVFASAVANGGAVKAINVKGAAANYSRKDIDALGEFAANYGAKGLAWLKTEADGLKGPIAKFFAGEKQEALVQALDAADGDLLLFVADKLEVANDALGALRLKLGKELNLIDESLFNFLWVVDWPLLEYDAEEGRYYAAHHPFTMPVREDLKLIETNPQDMKAQAYDLVLNGYELGGGSIRIFEKDVQEKMFGLLGFSEEEAKEQFGFLLEAFDYGAPPHGGIALGLDRLVMLLSGRTNLRDTIAFPKTASASCLMTEAPSEVDNAQLDELHLEIKRKIRQ</sequence>
<keyword id="KW-0030">Aminoacyl-tRNA synthetase</keyword>
<keyword id="KW-0067">ATP-binding</keyword>
<keyword id="KW-0963">Cytoplasm</keyword>
<keyword id="KW-0436">Ligase</keyword>
<keyword id="KW-0547">Nucleotide-binding</keyword>
<keyword id="KW-0648">Protein biosynthesis</keyword>
<keyword id="KW-1185">Reference proteome</keyword>
<gene>
    <name evidence="1" type="primary">aspS</name>
    <name type="ordered locus">BLi02881</name>
    <name type="ordered locus">BL05288</name>
</gene>
<proteinExistence type="inferred from homology"/>
<protein>
    <recommendedName>
        <fullName evidence="1">Aspartate--tRNA ligase</fullName>
        <ecNumber evidence="1">6.1.1.12</ecNumber>
    </recommendedName>
    <alternativeName>
        <fullName evidence="1">Aspartyl-tRNA synthetase</fullName>
        <shortName evidence="1">AspRS</shortName>
    </alternativeName>
</protein>
<reference key="1">
    <citation type="journal article" date="2004" name="J. Mol. Microbiol. Biotechnol.">
        <title>The complete genome sequence of Bacillus licheniformis DSM13, an organism with great industrial potential.</title>
        <authorList>
            <person name="Veith B."/>
            <person name="Herzberg C."/>
            <person name="Steckel S."/>
            <person name="Feesche J."/>
            <person name="Maurer K.H."/>
            <person name="Ehrenreich P."/>
            <person name="Baeumer S."/>
            <person name="Henne A."/>
            <person name="Liesegang H."/>
            <person name="Merkl R."/>
            <person name="Ehrenreich A."/>
            <person name="Gottschalk G."/>
        </authorList>
    </citation>
    <scope>NUCLEOTIDE SEQUENCE [LARGE SCALE GENOMIC DNA]</scope>
    <source>
        <strain>ATCC 14580 / DSM 13 / JCM 2505 / CCUG 7422 / NBRC 12200 / NCIMB 9375 / NCTC 10341 / NRRL NRS-1264 / Gibson 46</strain>
    </source>
</reference>
<reference key="2">
    <citation type="journal article" date="2004" name="Genome Biol.">
        <title>Complete genome sequence of the industrial bacterium Bacillus licheniformis and comparisons with closely related Bacillus species.</title>
        <authorList>
            <person name="Rey M.W."/>
            <person name="Ramaiya P."/>
            <person name="Nelson B.A."/>
            <person name="Brody-Karpin S.D."/>
            <person name="Zaretsky E.J."/>
            <person name="Tang M."/>
            <person name="Lopez de Leon A."/>
            <person name="Xiang H."/>
            <person name="Gusti V."/>
            <person name="Clausen I.G."/>
            <person name="Olsen P.B."/>
            <person name="Rasmussen M.D."/>
            <person name="Andersen J.T."/>
            <person name="Joergensen P.L."/>
            <person name="Larsen T.S."/>
            <person name="Sorokin A."/>
            <person name="Bolotin A."/>
            <person name="Lapidus A."/>
            <person name="Galleron N."/>
            <person name="Ehrlich S.D."/>
            <person name="Berka R.M."/>
        </authorList>
    </citation>
    <scope>NUCLEOTIDE SEQUENCE [LARGE SCALE GENOMIC DNA]</scope>
    <source>
        <strain>ATCC 14580 / DSM 13 / JCM 2505 / CCUG 7422 / NBRC 12200 / NCIMB 9375 / NCTC 10341 / NRRL NRS-1264 / Gibson 46</strain>
    </source>
</reference>
<feature type="chain" id="PRO_0000110827" description="Aspartate--tRNA ligase">
    <location>
        <begin position="1"/>
        <end position="592"/>
    </location>
</feature>
<feature type="region of interest" description="Aspartate" evidence="1">
    <location>
        <begin position="201"/>
        <end position="204"/>
    </location>
</feature>
<feature type="binding site" evidence="1">
    <location>
        <position position="177"/>
    </location>
    <ligand>
        <name>L-aspartate</name>
        <dbReference type="ChEBI" id="CHEBI:29991"/>
    </ligand>
</feature>
<feature type="binding site" evidence="1">
    <location>
        <begin position="223"/>
        <end position="225"/>
    </location>
    <ligand>
        <name>ATP</name>
        <dbReference type="ChEBI" id="CHEBI:30616"/>
    </ligand>
</feature>
<feature type="binding site" evidence="1">
    <location>
        <position position="223"/>
    </location>
    <ligand>
        <name>L-aspartate</name>
        <dbReference type="ChEBI" id="CHEBI:29991"/>
    </ligand>
</feature>
<feature type="binding site" evidence="1">
    <location>
        <position position="232"/>
    </location>
    <ligand>
        <name>ATP</name>
        <dbReference type="ChEBI" id="CHEBI:30616"/>
    </ligand>
</feature>
<feature type="binding site" evidence="1">
    <location>
        <position position="451"/>
    </location>
    <ligand>
        <name>L-aspartate</name>
        <dbReference type="ChEBI" id="CHEBI:29991"/>
    </ligand>
</feature>
<feature type="binding site" evidence="1">
    <location>
        <position position="485"/>
    </location>
    <ligand>
        <name>ATP</name>
        <dbReference type="ChEBI" id="CHEBI:30616"/>
    </ligand>
</feature>
<feature type="binding site" evidence="1">
    <location>
        <position position="492"/>
    </location>
    <ligand>
        <name>L-aspartate</name>
        <dbReference type="ChEBI" id="CHEBI:29991"/>
    </ligand>
</feature>
<feature type="binding site" evidence="1">
    <location>
        <begin position="537"/>
        <end position="540"/>
    </location>
    <ligand>
        <name>ATP</name>
        <dbReference type="ChEBI" id="CHEBI:30616"/>
    </ligand>
</feature>
<dbReference type="EC" id="6.1.1.12" evidence="1"/>
<dbReference type="EMBL" id="AE017333">
    <property type="protein sequence ID" value="AAU41750.1"/>
    <property type="molecule type" value="Genomic_DNA"/>
</dbReference>
<dbReference type="EMBL" id="CP000002">
    <property type="protein sequence ID" value="AAU24387.1"/>
    <property type="molecule type" value="Genomic_DNA"/>
</dbReference>
<dbReference type="RefSeq" id="WP_003183949.1">
    <property type="nucleotide sequence ID" value="NC_006322.1"/>
</dbReference>
<dbReference type="SMR" id="Q65GR4"/>
<dbReference type="STRING" id="279010.BL05288"/>
<dbReference type="GeneID" id="92860524"/>
<dbReference type="KEGG" id="bld:BLi02881"/>
<dbReference type="KEGG" id="bli:BL05288"/>
<dbReference type="PATRIC" id="fig|279010.13.peg.2939"/>
<dbReference type="eggNOG" id="COG0173">
    <property type="taxonomic scope" value="Bacteria"/>
</dbReference>
<dbReference type="HOGENOM" id="CLU_014330_3_2_9"/>
<dbReference type="Proteomes" id="UP000000606">
    <property type="component" value="Chromosome"/>
</dbReference>
<dbReference type="GO" id="GO:0005737">
    <property type="term" value="C:cytoplasm"/>
    <property type="evidence" value="ECO:0007669"/>
    <property type="project" value="UniProtKB-SubCell"/>
</dbReference>
<dbReference type="GO" id="GO:0004815">
    <property type="term" value="F:aspartate-tRNA ligase activity"/>
    <property type="evidence" value="ECO:0007669"/>
    <property type="project" value="UniProtKB-UniRule"/>
</dbReference>
<dbReference type="GO" id="GO:0005524">
    <property type="term" value="F:ATP binding"/>
    <property type="evidence" value="ECO:0007669"/>
    <property type="project" value="UniProtKB-UniRule"/>
</dbReference>
<dbReference type="GO" id="GO:0140096">
    <property type="term" value="F:catalytic activity, acting on a protein"/>
    <property type="evidence" value="ECO:0007669"/>
    <property type="project" value="UniProtKB-ARBA"/>
</dbReference>
<dbReference type="GO" id="GO:0003676">
    <property type="term" value="F:nucleic acid binding"/>
    <property type="evidence" value="ECO:0007669"/>
    <property type="project" value="InterPro"/>
</dbReference>
<dbReference type="GO" id="GO:0016740">
    <property type="term" value="F:transferase activity"/>
    <property type="evidence" value="ECO:0007669"/>
    <property type="project" value="UniProtKB-ARBA"/>
</dbReference>
<dbReference type="GO" id="GO:0006422">
    <property type="term" value="P:aspartyl-tRNA aminoacylation"/>
    <property type="evidence" value="ECO:0007669"/>
    <property type="project" value="UniProtKB-UniRule"/>
</dbReference>
<dbReference type="CDD" id="cd00777">
    <property type="entry name" value="AspRS_core"/>
    <property type="match status" value="1"/>
</dbReference>
<dbReference type="CDD" id="cd04317">
    <property type="entry name" value="EcAspRS_like_N"/>
    <property type="match status" value="1"/>
</dbReference>
<dbReference type="Gene3D" id="3.30.930.10">
    <property type="entry name" value="Bira Bifunctional Protein, Domain 2"/>
    <property type="match status" value="1"/>
</dbReference>
<dbReference type="Gene3D" id="3.30.1360.30">
    <property type="entry name" value="GAD-like domain"/>
    <property type="match status" value="1"/>
</dbReference>
<dbReference type="Gene3D" id="2.40.50.140">
    <property type="entry name" value="Nucleic acid-binding proteins"/>
    <property type="match status" value="1"/>
</dbReference>
<dbReference type="HAMAP" id="MF_00044">
    <property type="entry name" value="Asp_tRNA_synth_type1"/>
    <property type="match status" value="1"/>
</dbReference>
<dbReference type="InterPro" id="IPR004364">
    <property type="entry name" value="Aa-tRNA-synt_II"/>
</dbReference>
<dbReference type="InterPro" id="IPR006195">
    <property type="entry name" value="aa-tRNA-synth_II"/>
</dbReference>
<dbReference type="InterPro" id="IPR045864">
    <property type="entry name" value="aa-tRNA-synth_II/BPL/LPL"/>
</dbReference>
<dbReference type="InterPro" id="IPR004524">
    <property type="entry name" value="Asp-tRNA-ligase_1"/>
</dbReference>
<dbReference type="InterPro" id="IPR047089">
    <property type="entry name" value="Asp-tRNA-ligase_1_N"/>
</dbReference>
<dbReference type="InterPro" id="IPR002312">
    <property type="entry name" value="Asp/Asn-tRNA-synth_IIb"/>
</dbReference>
<dbReference type="InterPro" id="IPR047090">
    <property type="entry name" value="AspRS_core"/>
</dbReference>
<dbReference type="InterPro" id="IPR004115">
    <property type="entry name" value="GAD-like_sf"/>
</dbReference>
<dbReference type="InterPro" id="IPR029351">
    <property type="entry name" value="GAD_dom"/>
</dbReference>
<dbReference type="InterPro" id="IPR012340">
    <property type="entry name" value="NA-bd_OB-fold"/>
</dbReference>
<dbReference type="InterPro" id="IPR004365">
    <property type="entry name" value="NA-bd_OB_tRNA"/>
</dbReference>
<dbReference type="NCBIfam" id="TIGR00459">
    <property type="entry name" value="aspS_bact"/>
    <property type="match status" value="1"/>
</dbReference>
<dbReference type="NCBIfam" id="NF001750">
    <property type="entry name" value="PRK00476.1"/>
    <property type="match status" value="1"/>
</dbReference>
<dbReference type="PANTHER" id="PTHR22594:SF5">
    <property type="entry name" value="ASPARTATE--TRNA LIGASE, MITOCHONDRIAL"/>
    <property type="match status" value="1"/>
</dbReference>
<dbReference type="PANTHER" id="PTHR22594">
    <property type="entry name" value="ASPARTYL/LYSYL-TRNA SYNTHETASE"/>
    <property type="match status" value="1"/>
</dbReference>
<dbReference type="Pfam" id="PF02938">
    <property type="entry name" value="GAD"/>
    <property type="match status" value="1"/>
</dbReference>
<dbReference type="Pfam" id="PF00152">
    <property type="entry name" value="tRNA-synt_2"/>
    <property type="match status" value="1"/>
</dbReference>
<dbReference type="Pfam" id="PF01336">
    <property type="entry name" value="tRNA_anti-codon"/>
    <property type="match status" value="1"/>
</dbReference>
<dbReference type="PRINTS" id="PR01042">
    <property type="entry name" value="TRNASYNTHASP"/>
</dbReference>
<dbReference type="SUPFAM" id="SSF55681">
    <property type="entry name" value="Class II aaRS and biotin synthetases"/>
    <property type="match status" value="1"/>
</dbReference>
<dbReference type="SUPFAM" id="SSF55261">
    <property type="entry name" value="GAD domain-like"/>
    <property type="match status" value="1"/>
</dbReference>
<dbReference type="SUPFAM" id="SSF50249">
    <property type="entry name" value="Nucleic acid-binding proteins"/>
    <property type="match status" value="1"/>
</dbReference>
<dbReference type="PROSITE" id="PS50862">
    <property type="entry name" value="AA_TRNA_LIGASE_II"/>
    <property type="match status" value="1"/>
</dbReference>
<accession>Q65GR4</accession>
<accession>Q62S73</accession>
<organism>
    <name type="scientific">Bacillus licheniformis (strain ATCC 14580 / DSM 13 / JCM 2505 / CCUG 7422 / NBRC 12200 / NCIMB 9375 / NCTC 10341 / NRRL NRS-1264 / Gibson 46)</name>
    <dbReference type="NCBI Taxonomy" id="279010"/>
    <lineage>
        <taxon>Bacteria</taxon>
        <taxon>Bacillati</taxon>
        <taxon>Bacillota</taxon>
        <taxon>Bacilli</taxon>
        <taxon>Bacillales</taxon>
        <taxon>Bacillaceae</taxon>
        <taxon>Bacillus</taxon>
    </lineage>
</organism>